<proteinExistence type="evidence at protein level"/>
<keyword id="KW-0520">NAD</keyword>
<keyword id="KW-0560">Oxidoreductase</keyword>
<keyword id="KW-0614">Plasmid</keyword>
<organism evidence="8">
    <name type="scientific">Terrabacter sp. (strain DBF63)</name>
    <dbReference type="NCBI Taxonomy" id="150395"/>
    <lineage>
        <taxon>Bacteria</taxon>
        <taxon>Bacillati</taxon>
        <taxon>Actinomycetota</taxon>
        <taxon>Actinomycetes</taxon>
        <taxon>Micrococcales</taxon>
        <taxon>Intrasporangiaceae</taxon>
        <taxon>Terrabacter</taxon>
    </lineage>
</organism>
<protein>
    <recommendedName>
        <fullName evidence="5">Fluoren-9-ol dehydrogenase</fullName>
        <ecNumber evidence="3">1.1.1.256</ecNumber>
    </recommendedName>
    <alternativeName>
        <fullName evidence="5">1,1a-dihydroxy-1-hydro-9-fluorenone dehydrogenase</fullName>
        <shortName evidence="5">DHF dehydrogenase</shortName>
    </alternativeName>
</protein>
<geneLocation type="plasmid" evidence="9">
    <name>pDBF1</name>
</geneLocation>
<dbReference type="EC" id="1.1.1.256" evidence="3"/>
<dbReference type="EMBL" id="AP008980">
    <property type="protein sequence ID" value="BAE45091.1"/>
    <property type="molecule type" value="Genomic_DNA"/>
</dbReference>
<dbReference type="EMBL" id="AB054975">
    <property type="protein sequence ID" value="BAB55885.1"/>
    <property type="molecule type" value="Genomic_DNA"/>
</dbReference>
<dbReference type="EMBL" id="AB095015">
    <property type="protein sequence ID" value="BAC75992.1"/>
    <property type="molecule type" value="Genomic_DNA"/>
</dbReference>
<dbReference type="SMR" id="Q93UV4"/>
<dbReference type="KEGG" id="ag:BAC75992"/>
<dbReference type="GO" id="GO:0018461">
    <property type="term" value="F:fluoren-9-ol dehydrogenase activity"/>
    <property type="evidence" value="ECO:0000314"/>
    <property type="project" value="UniProtKB"/>
</dbReference>
<dbReference type="GO" id="GO:0051287">
    <property type="term" value="F:NAD binding"/>
    <property type="evidence" value="ECO:0000314"/>
    <property type="project" value="UniProtKB"/>
</dbReference>
<dbReference type="GO" id="GO:0019429">
    <property type="term" value="P:fluorene catabolic process"/>
    <property type="evidence" value="ECO:0000314"/>
    <property type="project" value="UniProtKB"/>
</dbReference>
<dbReference type="CDD" id="cd05233">
    <property type="entry name" value="SDR_c"/>
    <property type="match status" value="1"/>
</dbReference>
<dbReference type="Gene3D" id="3.40.50.720">
    <property type="entry name" value="NAD(P)-binding Rossmann-like Domain"/>
    <property type="match status" value="1"/>
</dbReference>
<dbReference type="InterPro" id="IPR036291">
    <property type="entry name" value="NAD(P)-bd_dom_sf"/>
</dbReference>
<dbReference type="InterPro" id="IPR002347">
    <property type="entry name" value="SDR_fam"/>
</dbReference>
<dbReference type="PANTHER" id="PTHR42760">
    <property type="entry name" value="SHORT-CHAIN DEHYDROGENASES/REDUCTASES FAMILY MEMBER"/>
    <property type="match status" value="1"/>
</dbReference>
<dbReference type="Pfam" id="PF00106">
    <property type="entry name" value="adh_short"/>
    <property type="match status" value="1"/>
</dbReference>
<dbReference type="PRINTS" id="PR00081">
    <property type="entry name" value="GDHRDH"/>
</dbReference>
<dbReference type="PRINTS" id="PR00080">
    <property type="entry name" value="SDRFAMILY"/>
</dbReference>
<dbReference type="SUPFAM" id="SSF51735">
    <property type="entry name" value="NAD(P)-binding Rossmann-fold domains"/>
    <property type="match status" value="1"/>
</dbReference>
<reference key="1">
    <citation type="journal article" date="1997" name="J. Ferment. Bioeng.">
        <title>Cloning and characterization of genes involved in the degradation of dibenzofuran by Terrabacter sp. strain DBF63.</title>
        <authorList>
            <person name="Kasuga K."/>
            <person name="Nojiri H."/>
            <person name="Yamane H."/>
            <person name="Kodama T."/>
            <person name="Omori T."/>
        </authorList>
    </citation>
    <scope>NUCLEOTIDE SEQUENCE [GENOMIC DNA]</scope>
    <source>
        <strain>DBF63</strain>
        <plasmid>pDBF1</plasmid>
    </source>
</reference>
<reference key="2">
    <citation type="journal article" date="2001" name="Biochem. Biophys. Res. Commun.">
        <title>Isolation and characterization of the genes encoding a novel oxygenase component of angular dioxygenase from the gram-positive dibenzofuran-degrader Terrabacter sp. strain DBF63.</title>
        <authorList>
            <person name="Kasuga K."/>
            <person name="Habe H."/>
            <person name="Chung J."/>
            <person name="Yoshida T."/>
            <person name="Nojiri H."/>
            <person name="Yamane H."/>
            <person name="Omori T."/>
        </authorList>
    </citation>
    <scope>NUCLEOTIDE SEQUENCE [GENOMIC DNA]</scope>
    <source>
        <strain>DBF63</strain>
        <plasmid>pDBF1</plasmid>
    </source>
</reference>
<reference key="3">
    <citation type="journal article" date="2004" name="J. Bacteriol.">
        <title>Characterization of the upper pathway genes for fluorene metabolism in Terrabacter sp. strain DBF63.</title>
        <authorList>
            <person name="Habe H."/>
            <person name="Chung J."/>
            <person name="Kato H."/>
            <person name="Ayabe Y."/>
            <person name="Kasuga K."/>
            <person name="Yoshida T."/>
            <person name="Nojiri H."/>
            <person name="Yamane H."/>
            <person name="Omori T."/>
        </authorList>
    </citation>
    <scope>NUCLEOTIDE SEQUENCE [GENOMIC DNA]</scope>
    <scope>FUNCTION</scope>
    <scope>CATALYTIC ACTIVITY</scope>
    <scope>PATHWAY</scope>
    <source>
        <strain>DBF63</strain>
        <plasmid>pDBF1</plasmid>
    </source>
</reference>
<name>FLNB_TERSD</name>
<evidence type="ECO:0000250" key="1">
    <source>
        <dbReference type="UniProtKB" id="P16544"/>
    </source>
</evidence>
<evidence type="ECO:0000255" key="2">
    <source>
        <dbReference type="RuleBase" id="RU000363"/>
    </source>
</evidence>
<evidence type="ECO:0000269" key="3">
    <source>
    </source>
</evidence>
<evidence type="ECO:0000303" key="4">
    <source>
    </source>
</evidence>
<evidence type="ECO:0000303" key="5">
    <source>
    </source>
</evidence>
<evidence type="ECO:0000303" key="6">
    <source ref="1"/>
</evidence>
<evidence type="ECO:0000305" key="7">
    <source>
    </source>
</evidence>
<evidence type="ECO:0000312" key="8">
    <source>
        <dbReference type="EMBL" id="BAB55885.1"/>
    </source>
</evidence>
<evidence type="ECO:0000312" key="9">
    <source>
        <dbReference type="EMBL" id="BAE45091.1"/>
    </source>
</evidence>
<gene>
    <name evidence="5" type="primary">flnB</name>
    <name evidence="4 6" type="synonym">ORF4</name>
</gene>
<accession>Q93UV4</accession>
<feature type="chain" id="PRO_0000430705" description="Fluoren-9-ol dehydrogenase">
    <location>
        <begin position="1"/>
        <end position="357"/>
    </location>
</feature>
<feature type="active site" description="Proton acceptor" evidence="1">
    <location>
        <position position="198"/>
    </location>
</feature>
<feature type="binding site" evidence="1">
    <location>
        <begin position="36"/>
        <end position="67"/>
    </location>
    <ligand>
        <name>NADP(+)</name>
        <dbReference type="ChEBI" id="CHEBI:58349"/>
    </ligand>
</feature>
<feature type="binding site" evidence="1">
    <location>
        <position position="87"/>
    </location>
    <ligand>
        <name>NADP(+)</name>
        <dbReference type="ChEBI" id="CHEBI:58349"/>
    </ligand>
</feature>
<feature type="binding site" evidence="1">
    <location>
        <position position="202"/>
    </location>
    <ligand>
        <name>NADP(+)</name>
        <dbReference type="ChEBI" id="CHEBI:58349"/>
    </ligand>
</feature>
<comment type="function">
    <text evidence="3">Catalyzes the dehydrogenation of both 9-fluorenol and 1,1a-dihydroxy-1-hydro-9-fluorenone to produce 9-fluorenone and 2'-carboxy-2,3- dihydroxybiphenyl, respectively.</text>
</comment>
<comment type="catalytic activity">
    <reaction evidence="3">
        <text>9H-fluoren-9-ol + NADP(+) = 9H-fluoren-9-one + NADPH + H(+)</text>
        <dbReference type="Rhea" id="RHEA:12212"/>
        <dbReference type="ChEBI" id="CHEBI:15378"/>
        <dbReference type="ChEBI" id="CHEBI:16904"/>
        <dbReference type="ChEBI" id="CHEBI:17922"/>
        <dbReference type="ChEBI" id="CHEBI:57783"/>
        <dbReference type="ChEBI" id="CHEBI:58349"/>
        <dbReference type="EC" id="1.1.1.256"/>
    </reaction>
</comment>
<comment type="catalytic activity">
    <reaction evidence="3">
        <text>9H-fluoren-9-ol + NAD(+) = 9H-fluoren-9-one + NADH + H(+)</text>
        <dbReference type="Rhea" id="RHEA:12216"/>
        <dbReference type="ChEBI" id="CHEBI:15378"/>
        <dbReference type="ChEBI" id="CHEBI:16904"/>
        <dbReference type="ChEBI" id="CHEBI:17922"/>
        <dbReference type="ChEBI" id="CHEBI:57540"/>
        <dbReference type="ChEBI" id="CHEBI:57945"/>
        <dbReference type="EC" id="1.1.1.256"/>
    </reaction>
</comment>
<comment type="pathway">
    <text evidence="7">Aromatic compound metabolism.</text>
</comment>
<comment type="similarity">
    <text evidence="2">Belongs to the short-chain dehydrogenases/reductases (SDR) family.</text>
</comment>
<sequence length="357" mass="38512">MSESGGGTVATARQRQLVERALGEWQGEVAGRVIVVTGGARGIGRSLCEGLLRAGAKVVAADLTWDDADDFRKQLESDGSGMAVDMDITDDDALDAARDAVIDRFGTVDVLVNNASLVSETLFPPTGHRNTLDTTDRDWEVMFGVNVFGTLKAIRRFIEPMRAQQRGSIVNVVSSGVLAVAAGGGYHGLRPWTVEMPYQATKAAVMALTFYLAEEVRGDGVAVNAIMPGHTRASWFDATARAFNEQGIAYFMRPAIPEHLLPISLFLAAQDSAGASGRLYYVPEWNYDHGYGDYAAWQDHELPPDMEEIYSRLEAATPSYERAGVAHLPFDAQGALYAAGMANLGAQNSWTSNDSAQ</sequence>